<protein>
    <recommendedName>
        <fullName evidence="1">Ribosomal RNA small subunit methyltransferase B</fullName>
        <ecNumber evidence="1">2.1.1.176</ecNumber>
    </recommendedName>
    <alternativeName>
        <fullName evidence="1">16S rRNA m5C967 methyltransferase</fullName>
    </alternativeName>
    <alternativeName>
        <fullName evidence="1">rRNA (cytosine-C(5)-)-methyltransferase RsmB</fullName>
    </alternativeName>
</protein>
<proteinExistence type="inferred from homology"/>
<sequence length="429" mass="48069">MKKQNNLRSLAAQAVELVVEQGQSLSNVLPPLQQKVADKDKALLQELCFGVLRTLSQLEWLINKLMSRPMTGKQRTVHYLIMVGFYQLLYTRVPPHAALAETVEGAVSIKRPQLKGLINGVLRQFQRQQETLLNEFATSDARFLHPGWLVKRLQNAYPTQWQRIIEANNQRPPMWLRVNRTHHTRDGWLGLLEDAGMKGYPHPDYPDAVRLETPAPVHALPGFAEGWVTVQDASAQGCAVFLAPQNGEHILDLCAAPGGKTTHILEVAPEADVLAVDIDEQRLSRVYDNLKRLGMKATVKQGDGRYPAQWCGEQQFDRILLDAPCSATGVIRRHPDIKWLRRDRDIAELAQLQAEILDAVWPRLKPGGTLVYATCSVLPEENRDQIKAFLQRTPDAALSETGTPDQPGQQNLPGGEEGDGFFYAKLIKK</sequence>
<accession>Q8Z1X1</accession>
<gene>
    <name evidence="1" type="primary">rsmB</name>
    <name type="synonym">rrmB</name>
    <name evidence="1" type="synonym">sun</name>
    <name type="ordered locus">STY4389</name>
    <name type="ordered locus">t4096</name>
</gene>
<keyword id="KW-0963">Cytoplasm</keyword>
<keyword id="KW-0489">Methyltransferase</keyword>
<keyword id="KW-0694">RNA-binding</keyword>
<keyword id="KW-0698">rRNA processing</keyword>
<keyword id="KW-0949">S-adenosyl-L-methionine</keyword>
<keyword id="KW-0808">Transferase</keyword>
<reference key="1">
    <citation type="journal article" date="2001" name="Nature">
        <title>Complete genome sequence of a multiple drug resistant Salmonella enterica serovar Typhi CT18.</title>
        <authorList>
            <person name="Parkhill J."/>
            <person name="Dougan G."/>
            <person name="James K.D."/>
            <person name="Thomson N.R."/>
            <person name="Pickard D."/>
            <person name="Wain J."/>
            <person name="Churcher C.M."/>
            <person name="Mungall K.L."/>
            <person name="Bentley S.D."/>
            <person name="Holden M.T.G."/>
            <person name="Sebaihia M."/>
            <person name="Baker S."/>
            <person name="Basham D."/>
            <person name="Brooks K."/>
            <person name="Chillingworth T."/>
            <person name="Connerton P."/>
            <person name="Cronin A."/>
            <person name="Davis P."/>
            <person name="Davies R.M."/>
            <person name="Dowd L."/>
            <person name="White N."/>
            <person name="Farrar J."/>
            <person name="Feltwell T."/>
            <person name="Hamlin N."/>
            <person name="Haque A."/>
            <person name="Hien T.T."/>
            <person name="Holroyd S."/>
            <person name="Jagels K."/>
            <person name="Krogh A."/>
            <person name="Larsen T.S."/>
            <person name="Leather S."/>
            <person name="Moule S."/>
            <person name="O'Gaora P."/>
            <person name="Parry C."/>
            <person name="Quail M.A."/>
            <person name="Rutherford K.M."/>
            <person name="Simmonds M."/>
            <person name="Skelton J."/>
            <person name="Stevens K."/>
            <person name="Whitehead S."/>
            <person name="Barrell B.G."/>
        </authorList>
    </citation>
    <scope>NUCLEOTIDE SEQUENCE [LARGE SCALE GENOMIC DNA]</scope>
    <source>
        <strain>CT18</strain>
    </source>
</reference>
<reference key="2">
    <citation type="journal article" date="2003" name="J. Bacteriol.">
        <title>Comparative genomics of Salmonella enterica serovar Typhi strains Ty2 and CT18.</title>
        <authorList>
            <person name="Deng W."/>
            <person name="Liou S.-R."/>
            <person name="Plunkett G. III"/>
            <person name="Mayhew G.F."/>
            <person name="Rose D.J."/>
            <person name="Burland V."/>
            <person name="Kodoyianni V."/>
            <person name="Schwartz D.C."/>
            <person name="Blattner F.R."/>
        </authorList>
    </citation>
    <scope>NUCLEOTIDE SEQUENCE [LARGE SCALE GENOMIC DNA]</scope>
    <source>
        <strain>ATCC 700931 / Ty2</strain>
    </source>
</reference>
<feature type="chain" id="PRO_0000211802" description="Ribosomal RNA small subunit methyltransferase B">
    <location>
        <begin position="1"/>
        <end position="429"/>
    </location>
</feature>
<feature type="region of interest" description="Disordered" evidence="2">
    <location>
        <begin position="397"/>
        <end position="419"/>
    </location>
</feature>
<feature type="compositionally biased region" description="Polar residues" evidence="2">
    <location>
        <begin position="400"/>
        <end position="412"/>
    </location>
</feature>
<feature type="active site" description="Nucleophile" evidence="1">
    <location>
        <position position="375"/>
    </location>
</feature>
<feature type="binding site" evidence="1">
    <location>
        <begin position="254"/>
        <end position="260"/>
    </location>
    <ligand>
        <name>S-adenosyl-L-methionine</name>
        <dbReference type="ChEBI" id="CHEBI:59789"/>
    </ligand>
</feature>
<feature type="binding site" evidence="1">
    <location>
        <position position="277"/>
    </location>
    <ligand>
        <name>S-adenosyl-L-methionine</name>
        <dbReference type="ChEBI" id="CHEBI:59789"/>
    </ligand>
</feature>
<feature type="binding site" evidence="1">
    <location>
        <position position="303"/>
    </location>
    <ligand>
        <name>S-adenosyl-L-methionine</name>
        <dbReference type="ChEBI" id="CHEBI:59789"/>
    </ligand>
</feature>
<feature type="binding site" evidence="1">
    <location>
        <position position="322"/>
    </location>
    <ligand>
        <name>S-adenosyl-L-methionine</name>
        <dbReference type="ChEBI" id="CHEBI:59789"/>
    </ligand>
</feature>
<evidence type="ECO:0000255" key="1">
    <source>
        <dbReference type="HAMAP-Rule" id="MF_01856"/>
    </source>
</evidence>
<evidence type="ECO:0000256" key="2">
    <source>
        <dbReference type="SAM" id="MobiDB-lite"/>
    </source>
</evidence>
<dbReference type="EC" id="2.1.1.176" evidence="1"/>
<dbReference type="EMBL" id="AL513382">
    <property type="protein sequence ID" value="CAD09177.1"/>
    <property type="molecule type" value="Genomic_DNA"/>
</dbReference>
<dbReference type="EMBL" id="AE014613">
    <property type="protein sequence ID" value="AAO71563.1"/>
    <property type="molecule type" value="Genomic_DNA"/>
</dbReference>
<dbReference type="RefSeq" id="NP_458491.1">
    <property type="nucleotide sequence ID" value="NC_003198.1"/>
</dbReference>
<dbReference type="RefSeq" id="WP_000744595.1">
    <property type="nucleotide sequence ID" value="NZ_WSUR01000046.1"/>
</dbReference>
<dbReference type="SMR" id="Q8Z1X1"/>
<dbReference type="STRING" id="220341.gene:17588217"/>
<dbReference type="KEGG" id="stt:t4096"/>
<dbReference type="KEGG" id="sty:STY4389"/>
<dbReference type="PATRIC" id="fig|220341.7.peg.4485"/>
<dbReference type="eggNOG" id="COG0144">
    <property type="taxonomic scope" value="Bacteria"/>
</dbReference>
<dbReference type="eggNOG" id="COG0781">
    <property type="taxonomic scope" value="Bacteria"/>
</dbReference>
<dbReference type="HOGENOM" id="CLU_005316_0_4_6"/>
<dbReference type="OMA" id="RVNRQHH"/>
<dbReference type="OrthoDB" id="9810297at2"/>
<dbReference type="Proteomes" id="UP000000541">
    <property type="component" value="Chromosome"/>
</dbReference>
<dbReference type="Proteomes" id="UP000002670">
    <property type="component" value="Chromosome"/>
</dbReference>
<dbReference type="GO" id="GO:0005829">
    <property type="term" value="C:cytosol"/>
    <property type="evidence" value="ECO:0007669"/>
    <property type="project" value="TreeGrafter"/>
</dbReference>
<dbReference type="GO" id="GO:0003723">
    <property type="term" value="F:RNA binding"/>
    <property type="evidence" value="ECO:0007669"/>
    <property type="project" value="UniProtKB-KW"/>
</dbReference>
<dbReference type="GO" id="GO:0009383">
    <property type="term" value="F:rRNA (cytosine-C5-)-methyltransferase activity"/>
    <property type="evidence" value="ECO:0007669"/>
    <property type="project" value="TreeGrafter"/>
</dbReference>
<dbReference type="GO" id="GO:0006355">
    <property type="term" value="P:regulation of DNA-templated transcription"/>
    <property type="evidence" value="ECO:0007669"/>
    <property type="project" value="InterPro"/>
</dbReference>
<dbReference type="GO" id="GO:0070475">
    <property type="term" value="P:rRNA base methylation"/>
    <property type="evidence" value="ECO:0007669"/>
    <property type="project" value="TreeGrafter"/>
</dbReference>
<dbReference type="CDD" id="cd02440">
    <property type="entry name" value="AdoMet_MTases"/>
    <property type="match status" value="1"/>
</dbReference>
<dbReference type="CDD" id="cd00620">
    <property type="entry name" value="Methyltransferase_Sun"/>
    <property type="match status" value="1"/>
</dbReference>
<dbReference type="FunFam" id="1.10.287.730:FF:000001">
    <property type="entry name" value="Ribosomal RNA small subunit methyltransferase B"/>
    <property type="match status" value="1"/>
</dbReference>
<dbReference type="FunFam" id="1.10.940.10:FF:000002">
    <property type="entry name" value="Ribosomal RNA small subunit methyltransferase B"/>
    <property type="match status" value="1"/>
</dbReference>
<dbReference type="FunFam" id="3.30.70.1170:FF:000002">
    <property type="entry name" value="Ribosomal RNA small subunit methyltransferase B"/>
    <property type="match status" value="1"/>
</dbReference>
<dbReference type="FunFam" id="3.40.50.150:FF:000022">
    <property type="entry name" value="Ribosomal RNA small subunit methyltransferase B"/>
    <property type="match status" value="1"/>
</dbReference>
<dbReference type="Gene3D" id="1.10.287.730">
    <property type="entry name" value="Helix hairpin bin"/>
    <property type="match status" value="1"/>
</dbReference>
<dbReference type="Gene3D" id="1.10.940.10">
    <property type="entry name" value="NusB-like"/>
    <property type="match status" value="1"/>
</dbReference>
<dbReference type="Gene3D" id="3.30.70.1170">
    <property type="entry name" value="Sun protein, domain 3"/>
    <property type="match status" value="1"/>
</dbReference>
<dbReference type="Gene3D" id="3.40.50.150">
    <property type="entry name" value="Vaccinia Virus protein VP39"/>
    <property type="match status" value="1"/>
</dbReference>
<dbReference type="HAMAP" id="MF_01856">
    <property type="entry name" value="16SrRNA_methyltr_B"/>
    <property type="match status" value="1"/>
</dbReference>
<dbReference type="InterPro" id="IPR049560">
    <property type="entry name" value="MeTrfase_RsmB-F_NOP2_cat"/>
</dbReference>
<dbReference type="InterPro" id="IPR001678">
    <property type="entry name" value="MeTrfase_RsmB-F_NOP2_dom"/>
</dbReference>
<dbReference type="InterPro" id="IPR035926">
    <property type="entry name" value="NusB-like_sf"/>
</dbReference>
<dbReference type="InterPro" id="IPR006027">
    <property type="entry name" value="NusB_RsmB_TIM44"/>
</dbReference>
<dbReference type="InterPro" id="IPR023267">
    <property type="entry name" value="RCMT"/>
</dbReference>
<dbReference type="InterPro" id="IPR004573">
    <property type="entry name" value="rRNA_ssu_MeTfrase_B"/>
</dbReference>
<dbReference type="InterPro" id="IPR023541">
    <property type="entry name" value="rRNA_ssu_MeTfrase_B_ent"/>
</dbReference>
<dbReference type="InterPro" id="IPR054728">
    <property type="entry name" value="RsmB-like_ferredoxin"/>
</dbReference>
<dbReference type="InterPro" id="IPR048019">
    <property type="entry name" value="RsmB-like_N"/>
</dbReference>
<dbReference type="InterPro" id="IPR018314">
    <property type="entry name" value="RsmB/NOL1/NOP2-like_CS"/>
</dbReference>
<dbReference type="InterPro" id="IPR029063">
    <property type="entry name" value="SAM-dependent_MTases_sf"/>
</dbReference>
<dbReference type="NCBIfam" id="NF008149">
    <property type="entry name" value="PRK10901.1"/>
    <property type="match status" value="1"/>
</dbReference>
<dbReference type="NCBIfam" id="NF011494">
    <property type="entry name" value="PRK14902.1"/>
    <property type="match status" value="1"/>
</dbReference>
<dbReference type="NCBIfam" id="TIGR00563">
    <property type="entry name" value="rsmB"/>
    <property type="match status" value="1"/>
</dbReference>
<dbReference type="PANTHER" id="PTHR22807:SF61">
    <property type="entry name" value="NOL1_NOP2_SUN FAMILY PROTEIN _ ANTITERMINATION NUSB DOMAIN-CONTAINING PROTEIN"/>
    <property type="match status" value="1"/>
</dbReference>
<dbReference type="PANTHER" id="PTHR22807">
    <property type="entry name" value="NOP2 YEAST -RELATED NOL1/NOP2/FMU SUN DOMAIN-CONTAINING"/>
    <property type="match status" value="1"/>
</dbReference>
<dbReference type="Pfam" id="PF01189">
    <property type="entry name" value="Methyltr_RsmB-F"/>
    <property type="match status" value="1"/>
</dbReference>
<dbReference type="Pfam" id="PF01029">
    <property type="entry name" value="NusB"/>
    <property type="match status" value="1"/>
</dbReference>
<dbReference type="Pfam" id="PF22458">
    <property type="entry name" value="RsmF-B_ferredox"/>
    <property type="match status" value="1"/>
</dbReference>
<dbReference type="PRINTS" id="PR02008">
    <property type="entry name" value="RCMTFAMILY"/>
</dbReference>
<dbReference type="SUPFAM" id="SSF48013">
    <property type="entry name" value="NusB-like"/>
    <property type="match status" value="1"/>
</dbReference>
<dbReference type="SUPFAM" id="SSF53335">
    <property type="entry name" value="S-adenosyl-L-methionine-dependent methyltransferases"/>
    <property type="match status" value="1"/>
</dbReference>
<dbReference type="PROSITE" id="PS01153">
    <property type="entry name" value="NOL1_NOP2_SUN"/>
    <property type="match status" value="1"/>
</dbReference>
<dbReference type="PROSITE" id="PS51686">
    <property type="entry name" value="SAM_MT_RSMB_NOP"/>
    <property type="match status" value="1"/>
</dbReference>
<name>RSMB_SALTI</name>
<comment type="function">
    <text evidence="1">Specifically methylates the cytosine at position 967 (m5C967) of 16S rRNA.</text>
</comment>
<comment type="catalytic activity">
    <reaction evidence="1">
        <text>cytidine(967) in 16S rRNA + S-adenosyl-L-methionine = 5-methylcytidine(967) in 16S rRNA + S-adenosyl-L-homocysteine + H(+)</text>
        <dbReference type="Rhea" id="RHEA:42748"/>
        <dbReference type="Rhea" id="RHEA-COMP:10219"/>
        <dbReference type="Rhea" id="RHEA-COMP:10220"/>
        <dbReference type="ChEBI" id="CHEBI:15378"/>
        <dbReference type="ChEBI" id="CHEBI:57856"/>
        <dbReference type="ChEBI" id="CHEBI:59789"/>
        <dbReference type="ChEBI" id="CHEBI:74483"/>
        <dbReference type="ChEBI" id="CHEBI:82748"/>
        <dbReference type="EC" id="2.1.1.176"/>
    </reaction>
</comment>
<comment type="subcellular location">
    <subcellularLocation>
        <location evidence="1">Cytoplasm</location>
    </subcellularLocation>
</comment>
<comment type="similarity">
    <text evidence="1">Belongs to the class I-like SAM-binding methyltransferase superfamily. RsmB/NOP family.</text>
</comment>
<organism>
    <name type="scientific">Salmonella typhi</name>
    <dbReference type="NCBI Taxonomy" id="90370"/>
    <lineage>
        <taxon>Bacteria</taxon>
        <taxon>Pseudomonadati</taxon>
        <taxon>Pseudomonadota</taxon>
        <taxon>Gammaproteobacteria</taxon>
        <taxon>Enterobacterales</taxon>
        <taxon>Enterobacteriaceae</taxon>
        <taxon>Salmonella</taxon>
    </lineage>
</organism>